<gene>
    <name evidence="1" type="primary">adk</name>
    <name type="ordered locus">NIS_0769</name>
</gene>
<comment type="function">
    <text evidence="1">Catalyzes the reversible transfer of the terminal phosphate group between ATP and AMP. Plays an important role in cellular energy homeostasis and in adenine nucleotide metabolism.</text>
</comment>
<comment type="catalytic activity">
    <reaction evidence="1">
        <text>AMP + ATP = 2 ADP</text>
        <dbReference type="Rhea" id="RHEA:12973"/>
        <dbReference type="ChEBI" id="CHEBI:30616"/>
        <dbReference type="ChEBI" id="CHEBI:456215"/>
        <dbReference type="ChEBI" id="CHEBI:456216"/>
        <dbReference type="EC" id="2.7.4.3"/>
    </reaction>
</comment>
<comment type="pathway">
    <text evidence="1">Purine metabolism; AMP biosynthesis via salvage pathway; AMP from ADP: step 1/1.</text>
</comment>
<comment type="subunit">
    <text evidence="1">Monomer.</text>
</comment>
<comment type="subcellular location">
    <subcellularLocation>
        <location evidence="1">Cytoplasm</location>
    </subcellularLocation>
</comment>
<comment type="domain">
    <text evidence="1">Consists of three domains, a large central CORE domain and two small peripheral domains, NMPbind and LID, which undergo movements during catalysis. The LID domain closes over the site of phosphoryl transfer upon ATP binding. Assembling and dissambling the active center during each catalytic cycle provides an effective means to prevent ATP hydrolysis.</text>
</comment>
<comment type="similarity">
    <text evidence="1">Belongs to the adenylate kinase family.</text>
</comment>
<evidence type="ECO:0000255" key="1">
    <source>
        <dbReference type="HAMAP-Rule" id="MF_00235"/>
    </source>
</evidence>
<protein>
    <recommendedName>
        <fullName evidence="1">Adenylate kinase</fullName>
        <shortName evidence="1">AK</shortName>
        <ecNumber evidence="1">2.7.4.3</ecNumber>
    </recommendedName>
    <alternativeName>
        <fullName evidence="1">ATP-AMP transphosphorylase</fullName>
    </alternativeName>
    <alternativeName>
        <fullName evidence="1">ATP:AMP phosphotransferase</fullName>
    </alternativeName>
    <alternativeName>
        <fullName evidence="1">Adenylate monophosphate kinase</fullName>
    </alternativeName>
</protein>
<keyword id="KW-0067">ATP-binding</keyword>
<keyword id="KW-0963">Cytoplasm</keyword>
<keyword id="KW-0418">Kinase</keyword>
<keyword id="KW-0545">Nucleotide biosynthesis</keyword>
<keyword id="KW-0547">Nucleotide-binding</keyword>
<keyword id="KW-1185">Reference proteome</keyword>
<keyword id="KW-0808">Transferase</keyword>
<dbReference type="EC" id="2.7.4.3" evidence="1"/>
<dbReference type="EMBL" id="AP009178">
    <property type="protein sequence ID" value="BAF69881.1"/>
    <property type="molecule type" value="Genomic_DNA"/>
</dbReference>
<dbReference type="RefSeq" id="WP_012082144.1">
    <property type="nucleotide sequence ID" value="NC_009662.1"/>
</dbReference>
<dbReference type="SMR" id="A6Q322"/>
<dbReference type="FunCoup" id="A6Q322">
    <property type="interactions" value="474"/>
</dbReference>
<dbReference type="STRING" id="387092.NIS_0769"/>
<dbReference type="KEGG" id="nis:NIS_0769"/>
<dbReference type="eggNOG" id="COG0563">
    <property type="taxonomic scope" value="Bacteria"/>
</dbReference>
<dbReference type="HOGENOM" id="CLU_032354_4_1_7"/>
<dbReference type="InParanoid" id="A6Q322"/>
<dbReference type="OrthoDB" id="9805030at2"/>
<dbReference type="UniPathway" id="UPA00588">
    <property type="reaction ID" value="UER00649"/>
</dbReference>
<dbReference type="Proteomes" id="UP000001118">
    <property type="component" value="Chromosome"/>
</dbReference>
<dbReference type="GO" id="GO:0005737">
    <property type="term" value="C:cytoplasm"/>
    <property type="evidence" value="ECO:0007669"/>
    <property type="project" value="UniProtKB-SubCell"/>
</dbReference>
<dbReference type="GO" id="GO:0004017">
    <property type="term" value="F:adenylate kinase activity"/>
    <property type="evidence" value="ECO:0007669"/>
    <property type="project" value="UniProtKB-UniRule"/>
</dbReference>
<dbReference type="GO" id="GO:0005524">
    <property type="term" value="F:ATP binding"/>
    <property type="evidence" value="ECO:0007669"/>
    <property type="project" value="UniProtKB-UniRule"/>
</dbReference>
<dbReference type="GO" id="GO:0044209">
    <property type="term" value="P:AMP salvage"/>
    <property type="evidence" value="ECO:0007669"/>
    <property type="project" value="UniProtKB-UniRule"/>
</dbReference>
<dbReference type="CDD" id="cd01428">
    <property type="entry name" value="ADK"/>
    <property type="match status" value="1"/>
</dbReference>
<dbReference type="Gene3D" id="3.40.50.300">
    <property type="entry name" value="P-loop containing nucleotide triphosphate hydrolases"/>
    <property type="match status" value="1"/>
</dbReference>
<dbReference type="HAMAP" id="MF_00235">
    <property type="entry name" value="Adenylate_kinase_Adk"/>
    <property type="match status" value="1"/>
</dbReference>
<dbReference type="InterPro" id="IPR000850">
    <property type="entry name" value="Adenylat/UMP-CMP_kin"/>
</dbReference>
<dbReference type="InterPro" id="IPR033690">
    <property type="entry name" value="Adenylat_kinase_CS"/>
</dbReference>
<dbReference type="InterPro" id="IPR027417">
    <property type="entry name" value="P-loop_NTPase"/>
</dbReference>
<dbReference type="NCBIfam" id="NF001384">
    <property type="entry name" value="PRK00279.2-2"/>
    <property type="match status" value="1"/>
</dbReference>
<dbReference type="PANTHER" id="PTHR23359">
    <property type="entry name" value="NUCLEOTIDE KINASE"/>
    <property type="match status" value="1"/>
</dbReference>
<dbReference type="Pfam" id="PF00406">
    <property type="entry name" value="ADK"/>
    <property type="match status" value="1"/>
</dbReference>
<dbReference type="PRINTS" id="PR00094">
    <property type="entry name" value="ADENYLTKNASE"/>
</dbReference>
<dbReference type="SUPFAM" id="SSF52540">
    <property type="entry name" value="P-loop containing nucleoside triphosphate hydrolases"/>
    <property type="match status" value="1"/>
</dbReference>
<dbReference type="PROSITE" id="PS00113">
    <property type="entry name" value="ADENYLATE_KINASE"/>
    <property type="match status" value="1"/>
</dbReference>
<name>KAD_NITSB</name>
<reference key="1">
    <citation type="journal article" date="2007" name="Proc. Natl. Acad. Sci. U.S.A.">
        <title>Deep-sea vent epsilon-proteobacterial genomes provide insights into emergence of pathogens.</title>
        <authorList>
            <person name="Nakagawa S."/>
            <person name="Takaki Y."/>
            <person name="Shimamura S."/>
            <person name="Reysenbach A.-L."/>
            <person name="Takai K."/>
            <person name="Horikoshi K."/>
        </authorList>
    </citation>
    <scope>NUCLEOTIDE SEQUENCE [LARGE SCALE GENOMIC DNA]</scope>
    <source>
        <strain>SB155-2</strain>
    </source>
</reference>
<feature type="chain" id="PRO_1000058865" description="Adenylate kinase">
    <location>
        <begin position="1"/>
        <end position="194"/>
    </location>
</feature>
<feature type="region of interest" description="NMP" evidence="1">
    <location>
        <begin position="34"/>
        <end position="63"/>
    </location>
</feature>
<feature type="region of interest" description="LID" evidence="1">
    <location>
        <begin position="130"/>
        <end position="136"/>
    </location>
</feature>
<feature type="binding site" evidence="1">
    <location>
        <begin position="12"/>
        <end position="17"/>
    </location>
    <ligand>
        <name>ATP</name>
        <dbReference type="ChEBI" id="CHEBI:30616"/>
    </ligand>
</feature>
<feature type="binding site" evidence="1">
    <location>
        <position position="35"/>
    </location>
    <ligand>
        <name>AMP</name>
        <dbReference type="ChEBI" id="CHEBI:456215"/>
    </ligand>
</feature>
<feature type="binding site" evidence="1">
    <location>
        <position position="40"/>
    </location>
    <ligand>
        <name>AMP</name>
        <dbReference type="ChEBI" id="CHEBI:456215"/>
    </ligand>
</feature>
<feature type="binding site" evidence="1">
    <location>
        <begin position="61"/>
        <end position="63"/>
    </location>
    <ligand>
        <name>AMP</name>
        <dbReference type="ChEBI" id="CHEBI:456215"/>
    </ligand>
</feature>
<feature type="binding site" evidence="1">
    <location>
        <begin position="88"/>
        <end position="91"/>
    </location>
    <ligand>
        <name>AMP</name>
        <dbReference type="ChEBI" id="CHEBI:456215"/>
    </ligand>
</feature>
<feature type="binding site" evidence="1">
    <location>
        <position position="95"/>
    </location>
    <ligand>
        <name>AMP</name>
        <dbReference type="ChEBI" id="CHEBI:456215"/>
    </ligand>
</feature>
<feature type="binding site" evidence="1">
    <location>
        <position position="131"/>
    </location>
    <ligand>
        <name>ATP</name>
        <dbReference type="ChEBI" id="CHEBI:30616"/>
    </ligand>
</feature>
<feature type="binding site" evidence="1">
    <location>
        <position position="133"/>
    </location>
    <ligand>
        <name>AMP</name>
        <dbReference type="ChEBI" id="CHEBI:456215"/>
    </ligand>
</feature>
<feature type="binding site" evidence="1">
    <location>
        <position position="145"/>
    </location>
    <ligand>
        <name>AMP</name>
        <dbReference type="ChEBI" id="CHEBI:456215"/>
    </ligand>
</feature>
<feature type="binding site" evidence="1">
    <location>
        <position position="173"/>
    </location>
    <ligand>
        <name>ATP</name>
        <dbReference type="ChEBI" id="CHEBI:30616"/>
    </ligand>
</feature>
<sequence length="194" mass="21684">MKKLFLIIGAPGSGKTTDAEIIAKKHSDLIAHYSTGDLLREEVKKGTPLGATIASFIDNGQLVPLEIVMDTIKNAILNSDKEVIIIDGFPRSVEQMEALDKMLQENPSIKLEAVIEVVVSEETARERVLGRARGADDNVEVFNNRMKLYLEPLNQIEEFYEKKGLLKKIDGERTIEEIVADMESFILQKIDENA</sequence>
<accession>A6Q322</accession>
<organism>
    <name type="scientific">Nitratiruptor sp. (strain SB155-2)</name>
    <dbReference type="NCBI Taxonomy" id="387092"/>
    <lineage>
        <taxon>Bacteria</taxon>
        <taxon>Pseudomonadati</taxon>
        <taxon>Campylobacterota</taxon>
        <taxon>Epsilonproteobacteria</taxon>
        <taxon>Nautiliales</taxon>
        <taxon>Nitratiruptoraceae</taxon>
        <taxon>Nitratiruptor</taxon>
    </lineage>
</organism>
<proteinExistence type="inferred from homology"/>